<organism>
    <name type="scientific">Alkaliphilus oremlandii (strain OhILAs)</name>
    <name type="common">Clostridium oremlandii (strain OhILAs)</name>
    <dbReference type="NCBI Taxonomy" id="350688"/>
    <lineage>
        <taxon>Bacteria</taxon>
        <taxon>Bacillati</taxon>
        <taxon>Bacillota</taxon>
        <taxon>Clostridia</taxon>
        <taxon>Peptostreptococcales</taxon>
        <taxon>Natronincolaceae</taxon>
        <taxon>Alkaliphilus</taxon>
    </lineage>
</organism>
<gene>
    <name type="ordered locus">Clos_1766</name>
</gene>
<keyword id="KW-0378">Hydrolase</keyword>
<keyword id="KW-0479">Metal-binding</keyword>
<keyword id="KW-0482">Metalloprotease</keyword>
<keyword id="KW-0645">Protease</keyword>
<keyword id="KW-1185">Reference proteome</keyword>
<keyword id="KW-0862">Zinc</keyword>
<feature type="chain" id="PRO_0000322664" description="UPF0758 protein Clos_1766">
    <location>
        <begin position="1"/>
        <end position="232"/>
    </location>
</feature>
<feature type="domain" description="MPN" evidence="1">
    <location>
        <begin position="110"/>
        <end position="232"/>
    </location>
</feature>
<feature type="short sequence motif" description="JAMM motif" evidence="1">
    <location>
        <begin position="181"/>
        <end position="194"/>
    </location>
</feature>
<feature type="binding site" evidence="1">
    <location>
        <position position="181"/>
    </location>
    <ligand>
        <name>Zn(2+)</name>
        <dbReference type="ChEBI" id="CHEBI:29105"/>
        <note>catalytic</note>
    </ligand>
</feature>
<feature type="binding site" evidence="1">
    <location>
        <position position="183"/>
    </location>
    <ligand>
        <name>Zn(2+)</name>
        <dbReference type="ChEBI" id="CHEBI:29105"/>
        <note>catalytic</note>
    </ligand>
</feature>
<feature type="binding site" evidence="1">
    <location>
        <position position="194"/>
    </location>
    <ligand>
        <name>Zn(2+)</name>
        <dbReference type="ChEBI" id="CHEBI:29105"/>
        <note>catalytic</note>
    </ligand>
</feature>
<name>Y1766_ALKOO</name>
<dbReference type="EMBL" id="CP000853">
    <property type="protein sequence ID" value="ABW19306.1"/>
    <property type="molecule type" value="Genomic_DNA"/>
</dbReference>
<dbReference type="RefSeq" id="WP_012159618.1">
    <property type="nucleotide sequence ID" value="NC_009922.1"/>
</dbReference>
<dbReference type="SMR" id="A8MHM4"/>
<dbReference type="STRING" id="350688.Clos_1766"/>
<dbReference type="KEGG" id="aoe:Clos_1766"/>
<dbReference type="eggNOG" id="COG2003">
    <property type="taxonomic scope" value="Bacteria"/>
</dbReference>
<dbReference type="HOGENOM" id="CLU_073529_0_2_9"/>
<dbReference type="OrthoDB" id="9804482at2"/>
<dbReference type="Proteomes" id="UP000000269">
    <property type="component" value="Chromosome"/>
</dbReference>
<dbReference type="GO" id="GO:0046872">
    <property type="term" value="F:metal ion binding"/>
    <property type="evidence" value="ECO:0007669"/>
    <property type="project" value="UniProtKB-KW"/>
</dbReference>
<dbReference type="GO" id="GO:0008237">
    <property type="term" value="F:metallopeptidase activity"/>
    <property type="evidence" value="ECO:0007669"/>
    <property type="project" value="UniProtKB-KW"/>
</dbReference>
<dbReference type="GO" id="GO:0006508">
    <property type="term" value="P:proteolysis"/>
    <property type="evidence" value="ECO:0007669"/>
    <property type="project" value="UniProtKB-KW"/>
</dbReference>
<dbReference type="CDD" id="cd08071">
    <property type="entry name" value="MPN_DUF2466"/>
    <property type="match status" value="1"/>
</dbReference>
<dbReference type="Gene3D" id="3.40.140.10">
    <property type="entry name" value="Cytidine Deaminase, domain 2"/>
    <property type="match status" value="1"/>
</dbReference>
<dbReference type="InterPro" id="IPR037518">
    <property type="entry name" value="MPN"/>
</dbReference>
<dbReference type="InterPro" id="IPR025657">
    <property type="entry name" value="RadC_JAB"/>
</dbReference>
<dbReference type="InterPro" id="IPR010994">
    <property type="entry name" value="RuvA_2-like"/>
</dbReference>
<dbReference type="InterPro" id="IPR001405">
    <property type="entry name" value="UPF0758"/>
</dbReference>
<dbReference type="InterPro" id="IPR020891">
    <property type="entry name" value="UPF0758_CS"/>
</dbReference>
<dbReference type="InterPro" id="IPR046778">
    <property type="entry name" value="UPF0758_N"/>
</dbReference>
<dbReference type="NCBIfam" id="NF000642">
    <property type="entry name" value="PRK00024.1"/>
    <property type="match status" value="1"/>
</dbReference>
<dbReference type="NCBIfam" id="TIGR00608">
    <property type="entry name" value="radc"/>
    <property type="match status" value="1"/>
</dbReference>
<dbReference type="PANTHER" id="PTHR30471">
    <property type="entry name" value="DNA REPAIR PROTEIN RADC"/>
    <property type="match status" value="1"/>
</dbReference>
<dbReference type="PANTHER" id="PTHR30471:SF3">
    <property type="entry name" value="UPF0758 PROTEIN YEES-RELATED"/>
    <property type="match status" value="1"/>
</dbReference>
<dbReference type="Pfam" id="PF04002">
    <property type="entry name" value="RadC"/>
    <property type="match status" value="1"/>
</dbReference>
<dbReference type="Pfam" id="PF20582">
    <property type="entry name" value="UPF0758_N"/>
    <property type="match status" value="1"/>
</dbReference>
<dbReference type="SUPFAM" id="SSF47781">
    <property type="entry name" value="RuvA domain 2-like"/>
    <property type="match status" value="1"/>
</dbReference>
<dbReference type="PROSITE" id="PS50249">
    <property type="entry name" value="MPN"/>
    <property type="match status" value="1"/>
</dbReference>
<dbReference type="PROSITE" id="PS01302">
    <property type="entry name" value="UPF0758"/>
    <property type="match status" value="1"/>
</dbReference>
<evidence type="ECO:0000255" key="1">
    <source>
        <dbReference type="PROSITE-ProRule" id="PRU01182"/>
    </source>
</evidence>
<evidence type="ECO:0000305" key="2"/>
<protein>
    <recommendedName>
        <fullName>UPF0758 protein Clos_1766</fullName>
    </recommendedName>
</protein>
<accession>A8MHM4</accession>
<proteinExistence type="inferred from homology"/>
<sequence length="232" mass="25518">MEDHYGYMSIKNMPMSERPREKLLSFGSQSLSNAELLAIILSTGTKDRTAIDLARSILNTSTEGLRGLKDCTIEELSQVKGVGLAKASQIIAAVELGKRISLTTKVNNYKIKGPDDVSNLLMEEMRYLNKEIFNILLLTTKHDIIAIENISVGSLNASIVHPREVFNRAIKRSSSAIILAHNHPSGDPNPSGEDINITKRLIEAGNIIGISVLDHIIIGDGVYFSMKEHKLI</sequence>
<comment type="similarity">
    <text evidence="2">Belongs to the UPF0758 family.</text>
</comment>
<reference key="1">
    <citation type="submission" date="2007-10" db="EMBL/GenBank/DDBJ databases">
        <title>Complete genome of Alkaliphilus oremlandii OhILAs.</title>
        <authorList>
            <person name="Copeland A."/>
            <person name="Lucas S."/>
            <person name="Lapidus A."/>
            <person name="Barry K."/>
            <person name="Detter J.C."/>
            <person name="Glavina del Rio T."/>
            <person name="Hammon N."/>
            <person name="Israni S."/>
            <person name="Dalin E."/>
            <person name="Tice H."/>
            <person name="Pitluck S."/>
            <person name="Chain P."/>
            <person name="Malfatti S."/>
            <person name="Shin M."/>
            <person name="Vergez L."/>
            <person name="Schmutz J."/>
            <person name="Larimer F."/>
            <person name="Land M."/>
            <person name="Hauser L."/>
            <person name="Kyrpides N."/>
            <person name="Mikhailova N."/>
            <person name="Stolz J.F."/>
            <person name="Dawson A."/>
            <person name="Fisher E."/>
            <person name="Crable B."/>
            <person name="Perera E."/>
            <person name="Lisak J."/>
            <person name="Ranganathan M."/>
            <person name="Basu P."/>
            <person name="Richardson P."/>
        </authorList>
    </citation>
    <scope>NUCLEOTIDE SEQUENCE [LARGE SCALE GENOMIC DNA]</scope>
    <source>
        <strain>OhILAs</strain>
    </source>
</reference>